<reference key="1">
    <citation type="journal article" date="2002" name="Science">
        <title>The genome sequence of the malaria mosquito Anopheles gambiae.</title>
        <authorList>
            <person name="Holt R.A."/>
            <person name="Subramanian G.M."/>
            <person name="Halpern A."/>
            <person name="Sutton G.G."/>
            <person name="Charlab R."/>
            <person name="Nusskern D.R."/>
            <person name="Wincker P."/>
            <person name="Clark A.G."/>
            <person name="Ribeiro J.M.C."/>
            <person name="Wides R."/>
            <person name="Salzberg S.L."/>
            <person name="Loftus B.J."/>
            <person name="Yandell M.D."/>
            <person name="Majoros W.H."/>
            <person name="Rusch D.B."/>
            <person name="Lai Z."/>
            <person name="Kraft C.L."/>
            <person name="Abril J.F."/>
            <person name="Anthouard V."/>
            <person name="Arensburger P."/>
            <person name="Atkinson P.W."/>
            <person name="Baden H."/>
            <person name="de Berardinis V."/>
            <person name="Baldwin D."/>
            <person name="Benes V."/>
            <person name="Biedler J."/>
            <person name="Blass C."/>
            <person name="Bolanos R."/>
            <person name="Boscus D."/>
            <person name="Barnstead M."/>
            <person name="Cai S."/>
            <person name="Center A."/>
            <person name="Chaturverdi K."/>
            <person name="Christophides G.K."/>
            <person name="Chrystal M.A.M."/>
            <person name="Clamp M."/>
            <person name="Cravchik A."/>
            <person name="Curwen V."/>
            <person name="Dana A."/>
            <person name="Delcher A."/>
            <person name="Dew I."/>
            <person name="Evans C.A."/>
            <person name="Flanigan M."/>
            <person name="Grundschober-Freimoser A."/>
            <person name="Friedli L."/>
            <person name="Gu Z."/>
            <person name="Guan P."/>
            <person name="Guigo R."/>
            <person name="Hillenmeyer M.E."/>
            <person name="Hladun S.L."/>
            <person name="Hogan J.R."/>
            <person name="Hong Y.S."/>
            <person name="Hoover J."/>
            <person name="Jaillon O."/>
            <person name="Ke Z."/>
            <person name="Kodira C.D."/>
            <person name="Kokoza E."/>
            <person name="Koutsos A."/>
            <person name="Letunic I."/>
            <person name="Levitsky A.A."/>
            <person name="Liang Y."/>
            <person name="Lin J.-J."/>
            <person name="Lobo N.F."/>
            <person name="Lopez J.R."/>
            <person name="Malek J.A."/>
            <person name="McIntosh T.C."/>
            <person name="Meister S."/>
            <person name="Miller J.R."/>
            <person name="Mobarry C."/>
            <person name="Mongin E."/>
            <person name="Murphy S.D."/>
            <person name="O'Brochta D.A."/>
            <person name="Pfannkoch C."/>
            <person name="Qi R."/>
            <person name="Regier M.A."/>
            <person name="Remington K."/>
            <person name="Shao H."/>
            <person name="Sharakhova M.V."/>
            <person name="Sitter C.D."/>
            <person name="Shetty J."/>
            <person name="Smith T.J."/>
            <person name="Strong R."/>
            <person name="Sun J."/>
            <person name="Thomasova D."/>
            <person name="Ton L.Q."/>
            <person name="Topalis P."/>
            <person name="Tu Z.J."/>
            <person name="Unger M.F."/>
            <person name="Walenz B."/>
            <person name="Wang A.H."/>
            <person name="Wang J."/>
            <person name="Wang M."/>
            <person name="Wang X."/>
            <person name="Woodford K.J."/>
            <person name="Wortman J.R."/>
            <person name="Wu M."/>
            <person name="Yao A."/>
            <person name="Zdobnov E.M."/>
            <person name="Zhang H."/>
            <person name="Zhao Q."/>
            <person name="Zhao S."/>
            <person name="Zhu S.C."/>
            <person name="Zhimulev I."/>
            <person name="Coluzzi M."/>
            <person name="della Torre A."/>
            <person name="Roth C.W."/>
            <person name="Louis C."/>
            <person name="Kalush F."/>
            <person name="Mural R.J."/>
            <person name="Myers E.W."/>
            <person name="Adams M.D."/>
            <person name="Smith H.O."/>
            <person name="Broder S."/>
            <person name="Gardner M.J."/>
            <person name="Fraser C.M."/>
            <person name="Birney E."/>
            <person name="Bork P."/>
            <person name="Brey P.T."/>
            <person name="Venter J.C."/>
            <person name="Weissenbach J."/>
            <person name="Kafatos F.C."/>
            <person name="Collins F.H."/>
            <person name="Hoffman S.L."/>
        </authorList>
    </citation>
    <scope>NUCLEOTIDE SEQUENCE [LARGE SCALE GENOMIC DNA]</scope>
    <source>
        <strain>PEST</strain>
    </source>
</reference>
<reference key="2">
    <citation type="journal article" date="2013" name="Genome Biol. Evol.">
        <title>Comparative genomics of odorant binding proteins in Anopheles gambiae, Aedes aegypti, and Culex quinquefasciatus.</title>
        <authorList>
            <person name="Manoharan M."/>
            <person name="Ng Fuk Chong M."/>
            <person name="Vaitinadapoule A."/>
            <person name="Frumence E."/>
            <person name="Sowdhamini R."/>
            <person name="Offmann B."/>
        </authorList>
    </citation>
    <scope>IDENTIFICATION</scope>
</reference>
<feature type="signal peptide" evidence="2">
    <location>
        <begin position="1"/>
        <end position="20"/>
    </location>
</feature>
<feature type="chain" id="PRO_0000430409" description="General odorant-binding protein 69">
    <location>
        <begin position="21"/>
        <end position="229"/>
    </location>
</feature>
<feature type="disulfide bond" evidence="1">
    <location>
        <begin position="66"/>
        <end position="106"/>
    </location>
</feature>
<evidence type="ECO:0000250" key="1"/>
<evidence type="ECO:0000255" key="2"/>
<evidence type="ECO:0000305" key="3"/>
<proteinExistence type="inferred from homology"/>
<dbReference type="EMBL" id="AAAB01008859">
    <property type="protein sequence ID" value="EGK96890.1"/>
    <property type="molecule type" value="Genomic_DNA"/>
</dbReference>
<dbReference type="RefSeq" id="XP_003436123.1">
    <property type="nucleotide sequence ID" value="XM_003436075.1"/>
</dbReference>
<dbReference type="STRING" id="7165.F5HK49"/>
<dbReference type="PaxDb" id="7165-AGAP013182-PA"/>
<dbReference type="EnsemblMetazoa" id="AGAP013182-RA">
    <property type="protein sequence ID" value="AGAP013182-PA"/>
    <property type="gene ID" value="AGAP013182"/>
</dbReference>
<dbReference type="VEuPathDB" id="VectorBase:AGAMI1_009934"/>
<dbReference type="VEuPathDB" id="VectorBase:AGAP013182"/>
<dbReference type="HOGENOM" id="CLU_1210682_0_0_1"/>
<dbReference type="InParanoid" id="F5HK49"/>
<dbReference type="OMA" id="RTNECLR"/>
<dbReference type="PhylomeDB" id="F5HK49"/>
<dbReference type="Proteomes" id="UP000007062">
    <property type="component" value="Chromosome 2R"/>
</dbReference>
<dbReference type="GO" id="GO:0005615">
    <property type="term" value="C:extracellular space"/>
    <property type="evidence" value="ECO:0000318"/>
    <property type="project" value="GO_Central"/>
</dbReference>
<dbReference type="GO" id="GO:0005549">
    <property type="term" value="F:odorant binding"/>
    <property type="evidence" value="ECO:0007669"/>
    <property type="project" value="InterPro"/>
</dbReference>
<dbReference type="GO" id="GO:0007608">
    <property type="term" value="P:sensory perception of smell"/>
    <property type="evidence" value="ECO:0000318"/>
    <property type="project" value="GO_Central"/>
</dbReference>
<dbReference type="Gene3D" id="1.10.238.20">
    <property type="entry name" value="Pheromone/general odorant binding protein domain"/>
    <property type="match status" value="1"/>
</dbReference>
<dbReference type="InterPro" id="IPR006170">
    <property type="entry name" value="PBP/GOBP"/>
</dbReference>
<dbReference type="InterPro" id="IPR036728">
    <property type="entry name" value="PBP_GOBP_sf"/>
</dbReference>
<dbReference type="PANTHER" id="PTHR11857:SF46">
    <property type="entry name" value="GENERAL ODORANT-BINDING PROTEIN 99A-RELATED"/>
    <property type="match status" value="1"/>
</dbReference>
<dbReference type="PANTHER" id="PTHR11857">
    <property type="entry name" value="ODORANT BINDING PROTEIN-RELATED"/>
    <property type="match status" value="1"/>
</dbReference>
<dbReference type="Pfam" id="PF01395">
    <property type="entry name" value="PBP_GOBP"/>
    <property type="match status" value="1"/>
</dbReference>
<dbReference type="SUPFAM" id="SSF47565">
    <property type="entry name" value="Insect pheromone/odorant-binding proteins"/>
    <property type="match status" value="1"/>
</dbReference>
<organism>
    <name type="scientific">Anopheles gambiae</name>
    <name type="common">African malaria mosquito</name>
    <dbReference type="NCBI Taxonomy" id="7165"/>
    <lineage>
        <taxon>Eukaryota</taxon>
        <taxon>Metazoa</taxon>
        <taxon>Ecdysozoa</taxon>
        <taxon>Arthropoda</taxon>
        <taxon>Hexapoda</taxon>
        <taxon>Insecta</taxon>
        <taxon>Pterygota</taxon>
        <taxon>Neoptera</taxon>
        <taxon>Endopterygota</taxon>
        <taxon>Diptera</taxon>
        <taxon>Nematocera</taxon>
        <taxon>Culicoidea</taxon>
        <taxon>Culicidae</taxon>
        <taxon>Anophelinae</taxon>
        <taxon>Anopheles</taxon>
    </lineage>
</organism>
<sequence>MDRLLLVLLSSASLLLTVYGIKHHIVTKSWSEAQSDCLQYLRVESPGRYLSHRYRDNQTSKQLIFCIILNLRIYDPTQNVLRLKAMGQFFNPDKTDTLYVNRTNACLLRVKVPPLVDSSEDSQLYSGVMGTLYEVFRCFYHCYGNINAIAPKLPPTVLELEKIQQECARMVGVSERLLDGGLQLSSHPRYSKLPRCIMLRSGGSVDYLTHRNNSSRRFKLKKNVENDTL</sequence>
<comment type="function">
    <text evidence="1">Present in the aqueous fluid surrounding olfactory sensory dendrites and are thought to aid in the capture and transport of hydrophobic odorants into and through this fluid.</text>
</comment>
<comment type="subcellular location">
    <subcellularLocation>
        <location evidence="1">Secreted</location>
    </subcellularLocation>
</comment>
<comment type="similarity">
    <text evidence="3">Belongs to the PBP/GOBP family.</text>
</comment>
<keyword id="KW-1015">Disulfide bond</keyword>
<keyword id="KW-0552">Olfaction</keyword>
<keyword id="KW-1185">Reference proteome</keyword>
<keyword id="KW-0964">Secreted</keyword>
<keyword id="KW-0716">Sensory transduction</keyword>
<keyword id="KW-0732">Signal</keyword>
<keyword id="KW-0813">Transport</keyword>
<gene>
    <name type="primary">Obp69</name>
    <name type="ORF">AGAP013182</name>
</gene>
<accession>F5HK49</accession>
<protein>
    <recommendedName>
        <fullName>General odorant-binding protein 69</fullName>
    </recommendedName>
</protein>
<name>OBP69_ANOGA</name>